<sequence>MIDDHEALLLLVLSSGPAALASLPLHPVLGKGYRNTPGALEEKAVRISCVRECLNVVQIGGRIPVLLTSAAELPRLGSCVR</sequence>
<name>Y791_TREPA</name>
<feature type="signal peptide" evidence="1">
    <location>
        <begin position="1"/>
        <end position="20"/>
    </location>
</feature>
<feature type="chain" id="PRO_0000014262" description="Uncharacterized protein TP_0791">
    <location>
        <begin position="21"/>
        <end position="81"/>
    </location>
</feature>
<accession>O83770</accession>
<organism>
    <name type="scientific">Treponema pallidum (strain Nichols)</name>
    <dbReference type="NCBI Taxonomy" id="243276"/>
    <lineage>
        <taxon>Bacteria</taxon>
        <taxon>Pseudomonadati</taxon>
        <taxon>Spirochaetota</taxon>
        <taxon>Spirochaetia</taxon>
        <taxon>Spirochaetales</taxon>
        <taxon>Treponemataceae</taxon>
        <taxon>Treponema</taxon>
    </lineage>
</organism>
<dbReference type="EMBL" id="AE000520">
    <property type="protein sequence ID" value="AAC65765.1"/>
    <property type="molecule type" value="Genomic_DNA"/>
</dbReference>
<dbReference type="PIR" id="F71280">
    <property type="entry name" value="F71280"/>
</dbReference>
<dbReference type="IntAct" id="O83770">
    <property type="interactions" value="4"/>
</dbReference>
<dbReference type="STRING" id="243276.TP_0791"/>
<dbReference type="EnsemblBacteria" id="AAC65765">
    <property type="protein sequence ID" value="AAC65765"/>
    <property type="gene ID" value="TP_0791"/>
</dbReference>
<dbReference type="KEGG" id="tpa:TP_0791"/>
<dbReference type="KEGG" id="tpw:TPANIC_0791"/>
<dbReference type="HOGENOM" id="CLU_2572858_0_0_12"/>
<dbReference type="Proteomes" id="UP000000811">
    <property type="component" value="Chromosome"/>
</dbReference>
<evidence type="ECO:0000255" key="1"/>
<keyword id="KW-1185">Reference proteome</keyword>
<keyword id="KW-0732">Signal</keyword>
<reference key="1">
    <citation type="journal article" date="1998" name="Science">
        <title>Complete genome sequence of Treponema pallidum, the syphilis spirochete.</title>
        <authorList>
            <person name="Fraser C.M."/>
            <person name="Norris S.J."/>
            <person name="Weinstock G.M."/>
            <person name="White O."/>
            <person name="Sutton G.G."/>
            <person name="Dodson R.J."/>
            <person name="Gwinn M.L."/>
            <person name="Hickey E.K."/>
            <person name="Clayton R.A."/>
            <person name="Ketchum K.A."/>
            <person name="Sodergren E."/>
            <person name="Hardham J.M."/>
            <person name="McLeod M.P."/>
            <person name="Salzberg S.L."/>
            <person name="Peterson J.D."/>
            <person name="Khalak H.G."/>
            <person name="Richardson D.L."/>
            <person name="Howell J.K."/>
            <person name="Chidambaram M."/>
            <person name="Utterback T.R."/>
            <person name="McDonald L.A."/>
            <person name="Artiach P."/>
            <person name="Bowman C."/>
            <person name="Cotton M.D."/>
            <person name="Fujii C."/>
            <person name="Garland S.A."/>
            <person name="Hatch B."/>
            <person name="Horst K."/>
            <person name="Roberts K.M."/>
            <person name="Sandusky M."/>
            <person name="Weidman J.F."/>
            <person name="Smith H.O."/>
            <person name="Venter J.C."/>
        </authorList>
    </citation>
    <scope>NUCLEOTIDE SEQUENCE [LARGE SCALE GENOMIC DNA]</scope>
    <source>
        <strain>Nichols</strain>
    </source>
</reference>
<proteinExistence type="inferred from homology"/>
<gene>
    <name type="ordered locus">TP_0791</name>
</gene>
<protein>
    <recommendedName>
        <fullName>Uncharacterized protein TP_0791</fullName>
    </recommendedName>
</protein>